<gene>
    <name evidence="1" type="primary">ccmA</name>
    <name type="ordered locus">NE0764</name>
</gene>
<comment type="function">
    <text evidence="1">Part of the ABC transporter complex CcmAB involved in the biogenesis of c-type cytochromes; once thought to export heme, this seems not to be the case, but its exact role is uncertain. Responsible for energy coupling to the transport system.</text>
</comment>
<comment type="catalytic activity">
    <reaction evidence="1">
        <text>heme b(in) + ATP + H2O = heme b(out) + ADP + phosphate + H(+)</text>
        <dbReference type="Rhea" id="RHEA:19261"/>
        <dbReference type="ChEBI" id="CHEBI:15377"/>
        <dbReference type="ChEBI" id="CHEBI:15378"/>
        <dbReference type="ChEBI" id="CHEBI:30616"/>
        <dbReference type="ChEBI" id="CHEBI:43474"/>
        <dbReference type="ChEBI" id="CHEBI:60344"/>
        <dbReference type="ChEBI" id="CHEBI:456216"/>
        <dbReference type="EC" id="7.6.2.5"/>
    </reaction>
</comment>
<comment type="subunit">
    <text evidence="1">The complex is composed of two ATP-binding proteins (CcmA) and two transmembrane proteins (CcmB).</text>
</comment>
<comment type="subcellular location">
    <subcellularLocation>
        <location evidence="1">Cell inner membrane</location>
        <topology evidence="1">Peripheral membrane protein</topology>
    </subcellularLocation>
</comment>
<comment type="similarity">
    <text evidence="1">Belongs to the ABC transporter superfamily. CcmA exporter (TC 3.A.1.107) family.</text>
</comment>
<reference key="1">
    <citation type="journal article" date="2003" name="J. Bacteriol.">
        <title>Complete genome sequence of the ammonia-oxidizing bacterium and obligate chemolithoautotroph Nitrosomonas europaea.</title>
        <authorList>
            <person name="Chain P."/>
            <person name="Lamerdin J.E."/>
            <person name="Larimer F.W."/>
            <person name="Regala W."/>
            <person name="Lao V."/>
            <person name="Land M.L."/>
            <person name="Hauser L."/>
            <person name="Hooper A.B."/>
            <person name="Klotz M.G."/>
            <person name="Norton J."/>
            <person name="Sayavedra-Soto L.A."/>
            <person name="Arciero D.M."/>
            <person name="Hommes N.G."/>
            <person name="Whittaker M.M."/>
            <person name="Arp D.J."/>
        </authorList>
    </citation>
    <scope>NUCLEOTIDE SEQUENCE [LARGE SCALE GENOMIC DNA]</scope>
    <source>
        <strain>ATCC 19718 / CIP 103999 / KCTC 2705 / NBRC 14298</strain>
    </source>
</reference>
<proteinExistence type="inferred from homology"/>
<dbReference type="EC" id="7.6.2.5" evidence="1"/>
<dbReference type="EMBL" id="AL954747">
    <property type="protein sequence ID" value="CAD84675.1"/>
    <property type="molecule type" value="Genomic_DNA"/>
</dbReference>
<dbReference type="SMR" id="Q82WC8"/>
<dbReference type="STRING" id="228410.NE0764"/>
<dbReference type="KEGG" id="neu:NE0764"/>
<dbReference type="eggNOG" id="COG4133">
    <property type="taxonomic scope" value="Bacteria"/>
</dbReference>
<dbReference type="HOGENOM" id="CLU_000604_1_2_4"/>
<dbReference type="OrthoDB" id="9800654at2"/>
<dbReference type="PhylomeDB" id="Q82WC8"/>
<dbReference type="Proteomes" id="UP000001416">
    <property type="component" value="Chromosome"/>
</dbReference>
<dbReference type="GO" id="GO:0005886">
    <property type="term" value="C:plasma membrane"/>
    <property type="evidence" value="ECO:0007669"/>
    <property type="project" value="UniProtKB-SubCell"/>
</dbReference>
<dbReference type="GO" id="GO:0015439">
    <property type="term" value="F:ABC-type heme transporter activity"/>
    <property type="evidence" value="ECO:0007669"/>
    <property type="project" value="UniProtKB-EC"/>
</dbReference>
<dbReference type="GO" id="GO:0005524">
    <property type="term" value="F:ATP binding"/>
    <property type="evidence" value="ECO:0007669"/>
    <property type="project" value="UniProtKB-KW"/>
</dbReference>
<dbReference type="GO" id="GO:0016887">
    <property type="term" value="F:ATP hydrolysis activity"/>
    <property type="evidence" value="ECO:0007669"/>
    <property type="project" value="InterPro"/>
</dbReference>
<dbReference type="GO" id="GO:0017004">
    <property type="term" value="P:cytochrome complex assembly"/>
    <property type="evidence" value="ECO:0007669"/>
    <property type="project" value="UniProtKB-KW"/>
</dbReference>
<dbReference type="Gene3D" id="3.40.50.300">
    <property type="entry name" value="P-loop containing nucleotide triphosphate hydrolases"/>
    <property type="match status" value="1"/>
</dbReference>
<dbReference type="InterPro" id="IPR003593">
    <property type="entry name" value="AAA+_ATPase"/>
</dbReference>
<dbReference type="InterPro" id="IPR003439">
    <property type="entry name" value="ABC_transporter-like_ATP-bd"/>
</dbReference>
<dbReference type="InterPro" id="IPR017871">
    <property type="entry name" value="ABC_transporter-like_CS"/>
</dbReference>
<dbReference type="InterPro" id="IPR005895">
    <property type="entry name" value="ABC_transptr_haem_export_CcmA"/>
</dbReference>
<dbReference type="InterPro" id="IPR027417">
    <property type="entry name" value="P-loop_NTPase"/>
</dbReference>
<dbReference type="NCBIfam" id="TIGR01189">
    <property type="entry name" value="ccmA"/>
    <property type="match status" value="1"/>
</dbReference>
<dbReference type="NCBIfam" id="NF010061">
    <property type="entry name" value="PRK13538.1"/>
    <property type="match status" value="1"/>
</dbReference>
<dbReference type="PANTHER" id="PTHR43499">
    <property type="entry name" value="ABC TRANSPORTER I FAMILY MEMBER 1"/>
    <property type="match status" value="1"/>
</dbReference>
<dbReference type="PANTHER" id="PTHR43499:SF1">
    <property type="entry name" value="ABC TRANSPORTER I FAMILY MEMBER 1"/>
    <property type="match status" value="1"/>
</dbReference>
<dbReference type="Pfam" id="PF00005">
    <property type="entry name" value="ABC_tran"/>
    <property type="match status" value="1"/>
</dbReference>
<dbReference type="SMART" id="SM00382">
    <property type="entry name" value="AAA"/>
    <property type="match status" value="1"/>
</dbReference>
<dbReference type="SUPFAM" id="SSF52540">
    <property type="entry name" value="P-loop containing nucleoside triphosphate hydrolases"/>
    <property type="match status" value="1"/>
</dbReference>
<dbReference type="PROSITE" id="PS00211">
    <property type="entry name" value="ABC_TRANSPORTER_1"/>
    <property type="match status" value="1"/>
</dbReference>
<dbReference type="PROSITE" id="PS50893">
    <property type="entry name" value="ABC_TRANSPORTER_2"/>
    <property type="match status" value="1"/>
</dbReference>
<dbReference type="PROSITE" id="PS51243">
    <property type="entry name" value="CCMA"/>
    <property type="match status" value="1"/>
</dbReference>
<keyword id="KW-0067">ATP-binding</keyword>
<keyword id="KW-0997">Cell inner membrane</keyword>
<keyword id="KW-1003">Cell membrane</keyword>
<keyword id="KW-0201">Cytochrome c-type biogenesis</keyword>
<keyword id="KW-0472">Membrane</keyword>
<keyword id="KW-0547">Nucleotide-binding</keyword>
<keyword id="KW-1185">Reference proteome</keyword>
<keyword id="KW-1278">Translocase</keyword>
<keyword id="KW-0813">Transport</keyword>
<evidence type="ECO:0000255" key="1">
    <source>
        <dbReference type="HAMAP-Rule" id="MF_01707"/>
    </source>
</evidence>
<name>CCMA_NITEU</name>
<feature type="chain" id="PRO_0000092190" description="Cytochrome c biogenesis ATP-binding export protein CcmA">
    <location>
        <begin position="1"/>
        <end position="213"/>
    </location>
</feature>
<feature type="domain" description="ABC transporter" evidence="1">
    <location>
        <begin position="11"/>
        <end position="213"/>
    </location>
</feature>
<feature type="binding site" evidence="1">
    <location>
        <begin position="43"/>
        <end position="50"/>
    </location>
    <ligand>
        <name>ATP</name>
        <dbReference type="ChEBI" id="CHEBI:30616"/>
    </ligand>
</feature>
<protein>
    <recommendedName>
        <fullName evidence="1">Cytochrome c biogenesis ATP-binding export protein CcmA</fullName>
        <ecNumber evidence="1">7.6.2.5</ecNumber>
    </recommendedName>
    <alternativeName>
        <fullName evidence="1">Heme exporter protein A</fullName>
    </alternativeName>
</protein>
<organism>
    <name type="scientific">Nitrosomonas europaea (strain ATCC 19718 / CIP 103999 / KCTC 2705 / NBRC 14298)</name>
    <dbReference type="NCBI Taxonomy" id="228410"/>
    <lineage>
        <taxon>Bacteria</taxon>
        <taxon>Pseudomonadati</taxon>
        <taxon>Pseudomonadota</taxon>
        <taxon>Betaproteobacteria</taxon>
        <taxon>Nitrosomonadales</taxon>
        <taxon>Nitrosomonadaceae</taxon>
        <taxon>Nitrosomonas</taxon>
    </lineage>
</organism>
<accession>Q82WC8</accession>
<sequence>MTTGPSPIEMLTARNLECIRGEHRLFSNLSFSVNPGELMFVGGPNGSGKTSLLRLLCGLSLPDDGEIYWNGTDIRKLGVDYRDVMTYLGHLGGIKDDLTAIENLRISCALAGCEIDEDQAADALGQIGLAGREMLPARVLSQGQRRRVALARLLVTRTKLWILDEPLTALDVAAVELIKGILEHNLAKGGMVIMTTHQELVMSTVTVHHLVLS</sequence>